<feature type="chain" id="PRO_0000118289" description="NADH-ubiquinone oxidoreductase chain 6">
    <location>
        <begin position="1"/>
        <end position="175"/>
    </location>
</feature>
<feature type="transmembrane region" description="Helical" evidence="3">
    <location>
        <begin position="1"/>
        <end position="21"/>
    </location>
</feature>
<feature type="transmembrane region" description="Helical" evidence="3">
    <location>
        <begin position="25"/>
        <end position="45"/>
    </location>
</feature>
<feature type="transmembrane region" description="Helical" evidence="3">
    <location>
        <begin position="47"/>
        <end position="67"/>
    </location>
</feature>
<feature type="transmembrane region" description="Helical" evidence="3">
    <location>
        <begin position="88"/>
        <end position="108"/>
    </location>
</feature>
<feature type="transmembrane region" description="Helical" evidence="3">
    <location>
        <begin position="115"/>
        <end position="137"/>
    </location>
</feature>
<feature type="transmembrane region" description="Helical" evidence="3">
    <location>
        <begin position="149"/>
        <end position="169"/>
    </location>
</feature>
<protein>
    <recommendedName>
        <fullName>NADH-ubiquinone oxidoreductase chain 6</fullName>
        <ecNumber evidence="1">7.1.1.2</ecNumber>
    </recommendedName>
    <alternativeName>
        <fullName>NADH dehydrogenase subunit 6</fullName>
    </alternativeName>
</protein>
<comment type="function">
    <text evidence="1">Core subunit of the mitochondrial membrane respiratory chain NADH dehydrogenase (Complex I) which catalyzes electron transfer from NADH through the respiratory chain, using ubiquinone as an electron acceptor. Essential for the catalytic activity and assembly of complex I.</text>
</comment>
<comment type="catalytic activity">
    <reaction evidence="1">
        <text>a ubiquinone + NADH + 5 H(+)(in) = a ubiquinol + NAD(+) + 4 H(+)(out)</text>
        <dbReference type="Rhea" id="RHEA:29091"/>
        <dbReference type="Rhea" id="RHEA-COMP:9565"/>
        <dbReference type="Rhea" id="RHEA-COMP:9566"/>
        <dbReference type="ChEBI" id="CHEBI:15378"/>
        <dbReference type="ChEBI" id="CHEBI:16389"/>
        <dbReference type="ChEBI" id="CHEBI:17976"/>
        <dbReference type="ChEBI" id="CHEBI:57540"/>
        <dbReference type="ChEBI" id="CHEBI:57945"/>
        <dbReference type="EC" id="7.1.1.2"/>
    </reaction>
</comment>
<comment type="subunit">
    <text evidence="2">Core subunit of respiratory chain NADH dehydrogenase (Complex I) which is composed of 45 different subunits.</text>
</comment>
<comment type="subcellular location">
    <subcellularLocation>
        <location evidence="2">Mitochondrion inner membrane</location>
        <topology evidence="3">Multi-pass membrane protein</topology>
    </subcellularLocation>
</comment>
<comment type="similarity">
    <text evidence="4">Belongs to the complex I subunit 6 family.</text>
</comment>
<gene>
    <name type="primary">MT-ND6</name>
    <name type="synonym">MTND6</name>
    <name type="synonym">NADH6</name>
    <name type="synonym">ND6</name>
</gene>
<accession>Q9ZZY0</accession>
<name>NU6M_HIPAM</name>
<proteinExistence type="inferred from homology"/>
<dbReference type="EC" id="7.1.1.2" evidence="1"/>
<dbReference type="EMBL" id="AJ010957">
    <property type="protein sequence ID" value="CAA09439.1"/>
    <property type="molecule type" value="Genomic_DNA"/>
</dbReference>
<dbReference type="RefSeq" id="NP_008801.1">
    <property type="nucleotide sequence ID" value="NC_000889.1"/>
</dbReference>
<dbReference type="SMR" id="Q9ZZY0"/>
<dbReference type="GeneID" id="808670"/>
<dbReference type="CTD" id="4541"/>
<dbReference type="GO" id="GO:0005743">
    <property type="term" value="C:mitochondrial inner membrane"/>
    <property type="evidence" value="ECO:0000250"/>
    <property type="project" value="UniProtKB"/>
</dbReference>
<dbReference type="GO" id="GO:0008137">
    <property type="term" value="F:NADH dehydrogenase (ubiquinone) activity"/>
    <property type="evidence" value="ECO:0000250"/>
    <property type="project" value="UniProtKB"/>
</dbReference>
<dbReference type="GO" id="GO:0006120">
    <property type="term" value="P:mitochondrial electron transport, NADH to ubiquinone"/>
    <property type="evidence" value="ECO:0000250"/>
    <property type="project" value="UniProtKB"/>
</dbReference>
<dbReference type="GO" id="GO:0032981">
    <property type="term" value="P:mitochondrial respiratory chain complex I assembly"/>
    <property type="evidence" value="ECO:0000250"/>
    <property type="project" value="UniProtKB"/>
</dbReference>
<dbReference type="Gene3D" id="1.20.120.1200">
    <property type="entry name" value="NADH-ubiquinone/plastoquinone oxidoreductase chain 6, subunit NuoJ"/>
    <property type="match status" value="1"/>
</dbReference>
<dbReference type="InterPro" id="IPR050269">
    <property type="entry name" value="ComplexI_Subunit6"/>
</dbReference>
<dbReference type="InterPro" id="IPR001457">
    <property type="entry name" value="NADH_UbQ/plastoQ_OxRdtase_su6"/>
</dbReference>
<dbReference type="InterPro" id="IPR042106">
    <property type="entry name" value="Nuo/plastoQ_OxRdtase_6_NuoJ"/>
</dbReference>
<dbReference type="PANTHER" id="PTHR11435">
    <property type="entry name" value="NADH UBIQUINONE OXIDOREDUCTASE SUBUNIT ND6"/>
    <property type="match status" value="1"/>
</dbReference>
<dbReference type="PANTHER" id="PTHR11435:SF1">
    <property type="entry name" value="NADH-UBIQUINONE OXIDOREDUCTASE CHAIN 6"/>
    <property type="match status" value="1"/>
</dbReference>
<dbReference type="Pfam" id="PF00499">
    <property type="entry name" value="Oxidored_q3"/>
    <property type="match status" value="1"/>
</dbReference>
<organism>
    <name type="scientific">Hippopotamus amphibius</name>
    <name type="common">Hippopotamus</name>
    <dbReference type="NCBI Taxonomy" id="9833"/>
    <lineage>
        <taxon>Eukaryota</taxon>
        <taxon>Metazoa</taxon>
        <taxon>Chordata</taxon>
        <taxon>Craniata</taxon>
        <taxon>Vertebrata</taxon>
        <taxon>Euteleostomi</taxon>
        <taxon>Mammalia</taxon>
        <taxon>Eutheria</taxon>
        <taxon>Laurasiatheria</taxon>
        <taxon>Artiodactyla</taxon>
        <taxon>Whippomorpha</taxon>
        <taxon>Ancodonta</taxon>
        <taxon>Hippopotamidae</taxon>
        <taxon>Hippopotamus</taxon>
    </lineage>
</organism>
<geneLocation type="mitochondrion"/>
<reference key="1">
    <citation type="journal article" date="1998" name="Proc. R. Soc. B">
        <title>Analyses of mitochondrial genomes strongly support a hippopotamus-whale clade.</title>
        <authorList>
            <person name="Ursing B.M."/>
            <person name="Arnason U."/>
        </authorList>
    </citation>
    <scope>NUCLEOTIDE SEQUENCE [GENOMIC DNA]</scope>
</reference>
<sequence>MMTYVVFILSIVFVIGLIGSPSKPSPIYGGLGLIVSGGAGCGMVLNFGGSFLGLMVFLVYLGGMLVVFGYTTAMATEQYPEVWVSNKVVLGAFLLGLMMEFLAVLYVLKEGEVELVFKFSGLGDWVVYGMSDFGVFSGEAMGVAALYSYGVWLVVVTGWSLFVGVVVIMEVTRGG</sequence>
<keyword id="KW-0249">Electron transport</keyword>
<keyword id="KW-0472">Membrane</keyword>
<keyword id="KW-0496">Mitochondrion</keyword>
<keyword id="KW-0999">Mitochondrion inner membrane</keyword>
<keyword id="KW-0520">NAD</keyword>
<keyword id="KW-0679">Respiratory chain</keyword>
<keyword id="KW-1278">Translocase</keyword>
<keyword id="KW-0812">Transmembrane</keyword>
<keyword id="KW-1133">Transmembrane helix</keyword>
<keyword id="KW-0813">Transport</keyword>
<keyword id="KW-0830">Ubiquinone</keyword>
<evidence type="ECO:0000250" key="1">
    <source>
        <dbReference type="UniProtKB" id="P03923"/>
    </source>
</evidence>
<evidence type="ECO:0000250" key="2">
    <source>
        <dbReference type="UniProtKB" id="P03924"/>
    </source>
</evidence>
<evidence type="ECO:0000255" key="3"/>
<evidence type="ECO:0000305" key="4"/>